<sequence>MDAIHPVSLRNSKRHPLLHSERNLSRRAVSPSISRSFFQHSNGSFPLFQNHRKSLPSAIYKSVDPYVDANPLDPLAAAKASFADFPEQDDSQSSTSPLSSKYHTKKNKQIFVEDSRRGGAASNAAAIAAKKSGYYERTSTRKRSLTVPTPRTSFPHHPRSRRFSLKNAAIATSYHKFKPLSSNSLSSSGMHFSASKQAFNSPLLQTFSPSPSVSPFSNPAVEKLKTSASKQAAEAQSLREFDFFTPTPEPSDKNLEKLKNGASKQASESQSLKNMESLSLARSSPILTSEKLKNGASKQAIESPPFRASEPLPSSNIIPNPAMERLKNGASKLAIESQPFKSAEPLSSAIPLPNPMSEKMRNGASKQAIMAQSSKINPLPPLTASISDPSFEKLKNTASKQAIESQSLMNSGPELLEPSISDPMLEKMKTDAGKQTVESLSLKSSDATIPKPSVSDLGVEKLKNDASKCAVESQSLMINDPSVSSTSFYNPNMEKLKNGAIKQAIEHQALNAAILNKTQLPYFHQSSSELPISASKRAALSQQTESASKSSSNISEMCDSHPPSNFSISASQQASKDRFSEATSSIDLDLSPGRSLSLASSKLSVKEAGARVYNRSVATPVMTPSNPFEISKSASQLASIAQVPVSEPAKTSEVNLKKSLSLASSKLSFQEAGTSLKEKTANVQHSPEVLNDRSLASLSASRHADAISSKSKQHTEIAQPAFNTTGTVLMKTKSNLSDSALSTPQHSDSVLFDITSKAARLASTCAKTDLHRKPRRKHKSFTLENYFGHNAEDESPQSDEVESQTPPSGYSENDIGGTDIYPFALQGAALAAAKDFSRREASLSDSQSAASMDMLPMKKKLSHSSASSTRSIKSLLTNANQKHIHSSINETDDIPTMAAHIVATGQKNKEKAPSFSNDQALDHLLGSAHKRIPSNKTEWSSSSLHIPSHNSFSDIHHRKIAAHAAAITAASEKLTPSIEETSYSSSKAHDASLSAATLVANKDKLIHAPTPQVLAPVLPKVSLPHRHSVSLGQIRGESEVEGDVFYDAPSDKEDLGSSNAPLDVPHGANRSSMDEVNGSKYDYSDGILDGSGQYTDSDMSDDENSLKDSQSSVLSFSAVPTKVLKFKLRDVLGSEYSPSPQLLASSSDVSGSSSAVRAAMKADKIFPAVHENPPPLKTKQSIAKPSPHTLRVPQKKHKHFYHRDDGKYKSGTNLRKSETVDLPQFFIDENRRKLYEGLWAANKGYLLSKSEYSKPNDLICNIVVRELWSRSGAPTSVLAKIYDLVDRHHTGVLGRDEFIVGMFLIDQYLKGRKLPLKVPDSVWLSSKRMGDMLWRLEKLQKKTDNKKPFFKKKKKKRKHLKKFFDFNTTAKVNEGAMTD</sequence>
<accession>O14066</accession>
<accession>Q9UQW4</accession>
<gene>
    <name type="ORF">SPAC1687.09</name>
</gene>
<keyword id="KW-0443">Lipid metabolism</keyword>
<keyword id="KW-1185">Reference proteome</keyword>
<dbReference type="EMBL" id="CU329670">
    <property type="protein sequence ID" value="CAA22603.1"/>
    <property type="molecule type" value="Genomic_DNA"/>
</dbReference>
<dbReference type="PIR" id="T37752">
    <property type="entry name" value="T37752"/>
</dbReference>
<dbReference type="BioGRID" id="279203">
    <property type="interactions" value="13"/>
</dbReference>
<dbReference type="FunCoup" id="O14066">
    <property type="interactions" value="17"/>
</dbReference>
<dbReference type="STRING" id="284812.O14066"/>
<dbReference type="iPTMnet" id="O14066"/>
<dbReference type="PaxDb" id="4896-SPAC1687.09.1"/>
<dbReference type="EnsemblFungi" id="SPAC1687.09.1">
    <property type="protein sequence ID" value="SPAC1687.09.1:pep"/>
    <property type="gene ID" value="SPAC1687.09"/>
</dbReference>
<dbReference type="KEGG" id="spo:2542753"/>
<dbReference type="PomBase" id="SPAC1687.09"/>
<dbReference type="VEuPathDB" id="FungiDB:SPAC1687.09"/>
<dbReference type="eggNOG" id="KOG0998">
    <property type="taxonomic scope" value="Eukaryota"/>
</dbReference>
<dbReference type="HOGENOM" id="CLU_255729_0_0_1"/>
<dbReference type="InParanoid" id="O14066"/>
<dbReference type="Reactome" id="R-SPO-416482">
    <property type="pathway name" value="G alpha (12/13) signalling events"/>
</dbReference>
<dbReference type="Reactome" id="R-SPO-8856828">
    <property type="pathway name" value="Clathrin-mediated endocytosis"/>
</dbReference>
<dbReference type="Reactome" id="R-SPO-9013148">
    <property type="pathway name" value="CDC42 GTPase cycle"/>
</dbReference>
<dbReference type="Reactome" id="R-SPO-9013406">
    <property type="pathway name" value="RHOQ GTPase cycle"/>
</dbReference>
<dbReference type="Reactome" id="R-SPO-9013420">
    <property type="pathway name" value="RHOU GTPase cycle"/>
</dbReference>
<dbReference type="PRO" id="PR:O14066"/>
<dbReference type="Proteomes" id="UP000002485">
    <property type="component" value="Chromosome I"/>
</dbReference>
<dbReference type="GO" id="GO:0032153">
    <property type="term" value="C:cell division site"/>
    <property type="evidence" value="ECO:0007005"/>
    <property type="project" value="PomBase"/>
</dbReference>
<dbReference type="GO" id="GO:0051286">
    <property type="term" value="C:cell tip"/>
    <property type="evidence" value="ECO:0007005"/>
    <property type="project" value="PomBase"/>
</dbReference>
<dbReference type="GO" id="GO:0005737">
    <property type="term" value="C:cytoplasm"/>
    <property type="evidence" value="ECO:0000318"/>
    <property type="project" value="GO_Central"/>
</dbReference>
<dbReference type="GO" id="GO:0005829">
    <property type="term" value="C:cytosol"/>
    <property type="evidence" value="ECO:0007005"/>
    <property type="project" value="PomBase"/>
</dbReference>
<dbReference type="GO" id="GO:0072686">
    <property type="term" value="C:mitotic spindle"/>
    <property type="evidence" value="ECO:0007005"/>
    <property type="project" value="PomBase"/>
</dbReference>
<dbReference type="GO" id="GO:0044732">
    <property type="term" value="C:mitotic spindle pole body"/>
    <property type="evidence" value="ECO:0007005"/>
    <property type="project" value="PomBase"/>
</dbReference>
<dbReference type="GO" id="GO:0005634">
    <property type="term" value="C:nucleus"/>
    <property type="evidence" value="ECO:0007005"/>
    <property type="project" value="PomBase"/>
</dbReference>
<dbReference type="GO" id="GO:0000407">
    <property type="term" value="C:phagophore assembly site"/>
    <property type="evidence" value="ECO:0000266"/>
    <property type="project" value="PomBase"/>
</dbReference>
<dbReference type="GO" id="GO:0005509">
    <property type="term" value="F:calcium ion binding"/>
    <property type="evidence" value="ECO:0007669"/>
    <property type="project" value="InterPro"/>
</dbReference>
<dbReference type="GO" id="GO:0006914">
    <property type="term" value="P:autophagy"/>
    <property type="evidence" value="ECO:0000266"/>
    <property type="project" value="PomBase"/>
</dbReference>
<dbReference type="GO" id="GO:0006629">
    <property type="term" value="P:lipid metabolic process"/>
    <property type="evidence" value="ECO:0007669"/>
    <property type="project" value="UniProtKB-KW"/>
</dbReference>
<dbReference type="CDD" id="cd00052">
    <property type="entry name" value="EH"/>
    <property type="match status" value="1"/>
</dbReference>
<dbReference type="Gene3D" id="1.10.238.10">
    <property type="entry name" value="EF-hand"/>
    <property type="match status" value="1"/>
</dbReference>
<dbReference type="InterPro" id="IPR011992">
    <property type="entry name" value="EF-hand-dom_pair"/>
</dbReference>
<dbReference type="InterPro" id="IPR002048">
    <property type="entry name" value="EF_hand_dom"/>
</dbReference>
<dbReference type="InterPro" id="IPR000261">
    <property type="entry name" value="EH_dom"/>
</dbReference>
<dbReference type="Pfam" id="PF12763">
    <property type="entry name" value="EH"/>
    <property type="match status" value="1"/>
</dbReference>
<dbReference type="SMART" id="SM00027">
    <property type="entry name" value="EH"/>
    <property type="match status" value="1"/>
</dbReference>
<dbReference type="SUPFAM" id="SSF47473">
    <property type="entry name" value="EF-hand"/>
    <property type="match status" value="1"/>
</dbReference>
<dbReference type="PROSITE" id="PS50222">
    <property type="entry name" value="EF_HAND_2"/>
    <property type="match status" value="1"/>
</dbReference>
<dbReference type="PROSITE" id="PS50031">
    <property type="entry name" value="EH"/>
    <property type="match status" value="1"/>
</dbReference>
<proteinExistence type="inferred from homology"/>
<protein>
    <recommendedName>
        <fullName>Increased rDNA silencing protein 4 homolog</fullName>
    </recommendedName>
</protein>
<reference key="1">
    <citation type="journal article" date="2002" name="Nature">
        <title>The genome sequence of Schizosaccharomyces pombe.</title>
        <authorList>
            <person name="Wood V."/>
            <person name="Gwilliam R."/>
            <person name="Rajandream M.A."/>
            <person name="Lyne M.H."/>
            <person name="Lyne R."/>
            <person name="Stewart A."/>
            <person name="Sgouros J.G."/>
            <person name="Peat N."/>
            <person name="Hayles J."/>
            <person name="Baker S.G."/>
            <person name="Basham D."/>
            <person name="Bowman S."/>
            <person name="Brooks K."/>
            <person name="Brown D."/>
            <person name="Brown S."/>
            <person name="Chillingworth T."/>
            <person name="Churcher C.M."/>
            <person name="Collins M."/>
            <person name="Connor R."/>
            <person name="Cronin A."/>
            <person name="Davis P."/>
            <person name="Feltwell T."/>
            <person name="Fraser A."/>
            <person name="Gentles S."/>
            <person name="Goble A."/>
            <person name="Hamlin N."/>
            <person name="Harris D.E."/>
            <person name="Hidalgo J."/>
            <person name="Hodgson G."/>
            <person name="Holroyd S."/>
            <person name="Hornsby T."/>
            <person name="Howarth S."/>
            <person name="Huckle E.J."/>
            <person name="Hunt S."/>
            <person name="Jagels K."/>
            <person name="James K.D."/>
            <person name="Jones L."/>
            <person name="Jones M."/>
            <person name="Leather S."/>
            <person name="McDonald S."/>
            <person name="McLean J."/>
            <person name="Mooney P."/>
            <person name="Moule S."/>
            <person name="Mungall K.L."/>
            <person name="Murphy L.D."/>
            <person name="Niblett D."/>
            <person name="Odell C."/>
            <person name="Oliver K."/>
            <person name="O'Neil S."/>
            <person name="Pearson D."/>
            <person name="Quail M.A."/>
            <person name="Rabbinowitsch E."/>
            <person name="Rutherford K.M."/>
            <person name="Rutter S."/>
            <person name="Saunders D."/>
            <person name="Seeger K."/>
            <person name="Sharp S."/>
            <person name="Skelton J."/>
            <person name="Simmonds M.N."/>
            <person name="Squares R."/>
            <person name="Squares S."/>
            <person name="Stevens K."/>
            <person name="Taylor K."/>
            <person name="Taylor R.G."/>
            <person name="Tivey A."/>
            <person name="Walsh S.V."/>
            <person name="Warren T."/>
            <person name="Whitehead S."/>
            <person name="Woodward J.R."/>
            <person name="Volckaert G."/>
            <person name="Aert R."/>
            <person name="Robben J."/>
            <person name="Grymonprez B."/>
            <person name="Weltjens I."/>
            <person name="Vanstreels E."/>
            <person name="Rieger M."/>
            <person name="Schaefer M."/>
            <person name="Mueller-Auer S."/>
            <person name="Gabel C."/>
            <person name="Fuchs M."/>
            <person name="Duesterhoeft A."/>
            <person name="Fritzc C."/>
            <person name="Holzer E."/>
            <person name="Moestl D."/>
            <person name="Hilbert H."/>
            <person name="Borzym K."/>
            <person name="Langer I."/>
            <person name="Beck A."/>
            <person name="Lehrach H."/>
            <person name="Reinhardt R."/>
            <person name="Pohl T.M."/>
            <person name="Eger P."/>
            <person name="Zimmermann W."/>
            <person name="Wedler H."/>
            <person name="Wambutt R."/>
            <person name="Purnelle B."/>
            <person name="Goffeau A."/>
            <person name="Cadieu E."/>
            <person name="Dreano S."/>
            <person name="Gloux S."/>
            <person name="Lelaure V."/>
            <person name="Mottier S."/>
            <person name="Galibert F."/>
            <person name="Aves S.J."/>
            <person name="Xiang Z."/>
            <person name="Hunt C."/>
            <person name="Moore K."/>
            <person name="Hurst S.M."/>
            <person name="Lucas M."/>
            <person name="Rochet M."/>
            <person name="Gaillardin C."/>
            <person name="Tallada V.A."/>
            <person name="Garzon A."/>
            <person name="Thode G."/>
            <person name="Daga R.R."/>
            <person name="Cruzado L."/>
            <person name="Jimenez J."/>
            <person name="Sanchez M."/>
            <person name="del Rey F."/>
            <person name="Benito J."/>
            <person name="Dominguez A."/>
            <person name="Revuelta J.L."/>
            <person name="Moreno S."/>
            <person name="Armstrong J."/>
            <person name="Forsburg S.L."/>
            <person name="Cerutti L."/>
            <person name="Lowe T."/>
            <person name="McCombie W.R."/>
            <person name="Paulsen I."/>
            <person name="Potashkin J."/>
            <person name="Shpakovski G.V."/>
            <person name="Ussery D."/>
            <person name="Barrell B.G."/>
            <person name="Nurse P."/>
        </authorList>
    </citation>
    <scope>NUCLEOTIDE SEQUENCE [LARGE SCALE GENOMIC DNA]</scope>
    <source>
        <strain>972 / ATCC 24843</strain>
    </source>
</reference>
<feature type="chain" id="PRO_0000116738" description="Increased rDNA silencing protein 4 homolog">
    <location>
        <begin position="1"/>
        <end position="1379"/>
    </location>
</feature>
<feature type="domain" description="EH" evidence="2">
    <location>
        <begin position="1240"/>
        <end position="1329"/>
    </location>
</feature>
<feature type="domain" description="EF-hand" evidence="3">
    <location>
        <begin position="1273"/>
        <end position="1308"/>
    </location>
</feature>
<feature type="region of interest" description="Disordered" evidence="4">
    <location>
        <begin position="1"/>
        <end position="25"/>
    </location>
</feature>
<feature type="region of interest" description="Disordered" evidence="4">
    <location>
        <begin position="138"/>
        <end position="159"/>
    </location>
</feature>
<feature type="region of interest" description="Disordered" evidence="4">
    <location>
        <begin position="240"/>
        <end position="314"/>
    </location>
</feature>
<feature type="region of interest" description="Disordered" evidence="4">
    <location>
        <begin position="337"/>
        <end position="370"/>
    </location>
</feature>
<feature type="region of interest" description="Disordered" evidence="4">
    <location>
        <begin position="534"/>
        <end position="573"/>
    </location>
</feature>
<feature type="region of interest" description="Disordered" evidence="4">
    <location>
        <begin position="768"/>
        <end position="816"/>
    </location>
</feature>
<feature type="region of interest" description="Disordered" evidence="4">
    <location>
        <begin position="1047"/>
        <end position="1110"/>
    </location>
</feature>
<feature type="region of interest" description="Disordered" evidence="4">
    <location>
        <begin position="1168"/>
        <end position="1208"/>
    </location>
</feature>
<feature type="compositionally biased region" description="Basic and acidic residues" evidence="4">
    <location>
        <begin position="250"/>
        <end position="259"/>
    </location>
</feature>
<feature type="compositionally biased region" description="Polar residues" evidence="4">
    <location>
        <begin position="262"/>
        <end position="287"/>
    </location>
</feature>
<feature type="compositionally biased region" description="Low complexity" evidence="4">
    <location>
        <begin position="541"/>
        <end position="555"/>
    </location>
</feature>
<feature type="compositionally biased region" description="Polar residues" evidence="4">
    <location>
        <begin position="562"/>
        <end position="573"/>
    </location>
</feature>
<feature type="compositionally biased region" description="Basic residues" evidence="4">
    <location>
        <begin position="770"/>
        <end position="780"/>
    </location>
</feature>
<feature type="compositionally biased region" description="Acidic residues" evidence="4">
    <location>
        <begin position="793"/>
        <end position="802"/>
    </location>
</feature>
<organism>
    <name type="scientific">Schizosaccharomyces pombe (strain 972 / ATCC 24843)</name>
    <name type="common">Fission yeast</name>
    <dbReference type="NCBI Taxonomy" id="284812"/>
    <lineage>
        <taxon>Eukaryota</taxon>
        <taxon>Fungi</taxon>
        <taxon>Dikarya</taxon>
        <taxon>Ascomycota</taxon>
        <taxon>Taphrinomycotina</taxon>
        <taxon>Schizosaccharomycetes</taxon>
        <taxon>Schizosaccharomycetales</taxon>
        <taxon>Schizosaccharomycetaceae</taxon>
        <taxon>Schizosaccharomyces</taxon>
    </lineage>
</organism>
<comment type="function">
    <text evidence="1">Positive regulator of phosphatidylinositol 4,5-bisphosphate turnover and negatively regulates signaling through the cell integrity pathway. Involved in rDNA silencing (By similarity).</text>
</comment>
<comment type="similarity">
    <text evidence="5">Belongs to the IRS4 family.</text>
</comment>
<evidence type="ECO:0000250" key="1"/>
<evidence type="ECO:0000255" key="2">
    <source>
        <dbReference type="PROSITE-ProRule" id="PRU00077"/>
    </source>
</evidence>
<evidence type="ECO:0000255" key="3">
    <source>
        <dbReference type="PROSITE-ProRule" id="PRU00448"/>
    </source>
</evidence>
<evidence type="ECO:0000256" key="4">
    <source>
        <dbReference type="SAM" id="MobiDB-lite"/>
    </source>
</evidence>
<evidence type="ECO:0000305" key="5"/>
<name>IRS4_SCHPO</name>